<organism>
    <name type="scientific">Mus musculus</name>
    <name type="common">Mouse</name>
    <dbReference type="NCBI Taxonomy" id="10090"/>
    <lineage>
        <taxon>Eukaryota</taxon>
        <taxon>Metazoa</taxon>
        <taxon>Chordata</taxon>
        <taxon>Craniata</taxon>
        <taxon>Vertebrata</taxon>
        <taxon>Euteleostomi</taxon>
        <taxon>Mammalia</taxon>
        <taxon>Eutheria</taxon>
        <taxon>Euarchontoglires</taxon>
        <taxon>Glires</taxon>
        <taxon>Rodentia</taxon>
        <taxon>Myomorpha</taxon>
        <taxon>Muroidea</taxon>
        <taxon>Muridae</taxon>
        <taxon>Murinae</taxon>
        <taxon>Mus</taxon>
        <taxon>Mus</taxon>
    </lineage>
</organism>
<sequence length="153" mass="17286">MPSPGLVMESGQVLPAFLLCSTLLVIKMYAVAVITGQMRLRKKAFANPEDALKRGGLQYYRSDPDVERCLRAHRNDMETIYPFLFLGFVYSFLGPNPLIAWIHFLVVLTGRVVHTVAYLGKLNPRLRSGAYVLAQFSCFSMALQILWEVAHHL</sequence>
<reference key="1">
    <citation type="journal article" date="2000" name="J. Biol. Chem.">
        <title>Regulation of prostaglandin E2 biosynthesis by inducible membrane-associated prostaglandin E2 synthase that acts in concert with cyclooxygenase-2.</title>
        <authorList>
            <person name="Murakami M."/>
            <person name="Naraba H."/>
            <person name="Tanioka T."/>
            <person name="Semmyo N."/>
            <person name="Nakatani Y."/>
            <person name="Kojima F."/>
            <person name="Ikeda T."/>
            <person name="Fueki M."/>
            <person name="Ueno A."/>
            <person name="Oh S."/>
            <person name="Kudo I."/>
        </authorList>
    </citation>
    <scope>NUCLEOTIDE SEQUENCE [MRNA]</scope>
    <scope>CATALYTIC ACTIVITY</scope>
    <scope>FUNCTION</scope>
    <scope>PATHWAY</scope>
    <source>
        <strain>C57BL/6J</strain>
    </source>
</reference>
<reference key="2">
    <citation type="journal article" date="2002" name="Arch. Biochem. Biophys.">
        <title>Biochemical characterization of mouse microsomal prostaglandin E synthase-1 and its colocalization with cyclooxygenase-2 in peritoneal macrophages.</title>
        <authorList>
            <person name="Lazarus M."/>
            <person name="Kubata B.K."/>
            <person name="Eguchi N."/>
            <person name="Fujitani Y."/>
            <person name="Urade Y."/>
            <person name="Hayaishi O."/>
        </authorList>
    </citation>
    <scope>NUCLEOTIDE SEQUENCE [MRNA]</scope>
    <scope>CATALYTIC ACTIVITY</scope>
    <scope>BIOPHYSICOCHEMICAL PROPERTIES</scope>
    <scope>INDUCTION</scope>
    <scope>FUNCTION</scope>
    <scope>SUBCELLULAR LOCATION</scope>
    <source>
        <tissue>Spleen</tissue>
    </source>
</reference>
<reference key="3">
    <citation type="journal article" date="2005" name="Science">
        <title>The transcriptional landscape of the mammalian genome.</title>
        <authorList>
            <person name="Carninci P."/>
            <person name="Kasukawa T."/>
            <person name="Katayama S."/>
            <person name="Gough J."/>
            <person name="Frith M.C."/>
            <person name="Maeda N."/>
            <person name="Oyama R."/>
            <person name="Ravasi T."/>
            <person name="Lenhard B."/>
            <person name="Wells C."/>
            <person name="Kodzius R."/>
            <person name="Shimokawa K."/>
            <person name="Bajic V.B."/>
            <person name="Brenner S.E."/>
            <person name="Batalov S."/>
            <person name="Forrest A.R."/>
            <person name="Zavolan M."/>
            <person name="Davis M.J."/>
            <person name="Wilming L.G."/>
            <person name="Aidinis V."/>
            <person name="Allen J.E."/>
            <person name="Ambesi-Impiombato A."/>
            <person name="Apweiler R."/>
            <person name="Aturaliya R.N."/>
            <person name="Bailey T.L."/>
            <person name="Bansal M."/>
            <person name="Baxter L."/>
            <person name="Beisel K.W."/>
            <person name="Bersano T."/>
            <person name="Bono H."/>
            <person name="Chalk A.M."/>
            <person name="Chiu K.P."/>
            <person name="Choudhary V."/>
            <person name="Christoffels A."/>
            <person name="Clutterbuck D.R."/>
            <person name="Crowe M.L."/>
            <person name="Dalla E."/>
            <person name="Dalrymple B.P."/>
            <person name="de Bono B."/>
            <person name="Della Gatta G."/>
            <person name="di Bernardo D."/>
            <person name="Down T."/>
            <person name="Engstrom P."/>
            <person name="Fagiolini M."/>
            <person name="Faulkner G."/>
            <person name="Fletcher C.F."/>
            <person name="Fukushima T."/>
            <person name="Furuno M."/>
            <person name="Futaki S."/>
            <person name="Gariboldi M."/>
            <person name="Georgii-Hemming P."/>
            <person name="Gingeras T.R."/>
            <person name="Gojobori T."/>
            <person name="Green R.E."/>
            <person name="Gustincich S."/>
            <person name="Harbers M."/>
            <person name="Hayashi Y."/>
            <person name="Hensch T.K."/>
            <person name="Hirokawa N."/>
            <person name="Hill D."/>
            <person name="Huminiecki L."/>
            <person name="Iacono M."/>
            <person name="Ikeo K."/>
            <person name="Iwama A."/>
            <person name="Ishikawa T."/>
            <person name="Jakt M."/>
            <person name="Kanapin A."/>
            <person name="Katoh M."/>
            <person name="Kawasawa Y."/>
            <person name="Kelso J."/>
            <person name="Kitamura H."/>
            <person name="Kitano H."/>
            <person name="Kollias G."/>
            <person name="Krishnan S.P."/>
            <person name="Kruger A."/>
            <person name="Kummerfeld S.K."/>
            <person name="Kurochkin I.V."/>
            <person name="Lareau L.F."/>
            <person name="Lazarevic D."/>
            <person name="Lipovich L."/>
            <person name="Liu J."/>
            <person name="Liuni S."/>
            <person name="McWilliam S."/>
            <person name="Madan Babu M."/>
            <person name="Madera M."/>
            <person name="Marchionni L."/>
            <person name="Matsuda H."/>
            <person name="Matsuzawa S."/>
            <person name="Miki H."/>
            <person name="Mignone F."/>
            <person name="Miyake S."/>
            <person name="Morris K."/>
            <person name="Mottagui-Tabar S."/>
            <person name="Mulder N."/>
            <person name="Nakano N."/>
            <person name="Nakauchi H."/>
            <person name="Ng P."/>
            <person name="Nilsson R."/>
            <person name="Nishiguchi S."/>
            <person name="Nishikawa S."/>
            <person name="Nori F."/>
            <person name="Ohara O."/>
            <person name="Okazaki Y."/>
            <person name="Orlando V."/>
            <person name="Pang K.C."/>
            <person name="Pavan W.J."/>
            <person name="Pavesi G."/>
            <person name="Pesole G."/>
            <person name="Petrovsky N."/>
            <person name="Piazza S."/>
            <person name="Reed J."/>
            <person name="Reid J.F."/>
            <person name="Ring B.Z."/>
            <person name="Ringwald M."/>
            <person name="Rost B."/>
            <person name="Ruan Y."/>
            <person name="Salzberg S.L."/>
            <person name="Sandelin A."/>
            <person name="Schneider C."/>
            <person name="Schoenbach C."/>
            <person name="Sekiguchi K."/>
            <person name="Semple C.A."/>
            <person name="Seno S."/>
            <person name="Sessa L."/>
            <person name="Sheng Y."/>
            <person name="Shibata Y."/>
            <person name="Shimada H."/>
            <person name="Shimada K."/>
            <person name="Silva D."/>
            <person name="Sinclair B."/>
            <person name="Sperling S."/>
            <person name="Stupka E."/>
            <person name="Sugiura K."/>
            <person name="Sultana R."/>
            <person name="Takenaka Y."/>
            <person name="Taki K."/>
            <person name="Tammoja K."/>
            <person name="Tan S.L."/>
            <person name="Tang S."/>
            <person name="Taylor M.S."/>
            <person name="Tegner J."/>
            <person name="Teichmann S.A."/>
            <person name="Ueda H.R."/>
            <person name="van Nimwegen E."/>
            <person name="Verardo R."/>
            <person name="Wei C.L."/>
            <person name="Yagi K."/>
            <person name="Yamanishi H."/>
            <person name="Zabarovsky E."/>
            <person name="Zhu S."/>
            <person name="Zimmer A."/>
            <person name="Hide W."/>
            <person name="Bult C."/>
            <person name="Grimmond S.M."/>
            <person name="Teasdale R.D."/>
            <person name="Liu E.T."/>
            <person name="Brusic V."/>
            <person name="Quackenbush J."/>
            <person name="Wahlestedt C."/>
            <person name="Mattick J.S."/>
            <person name="Hume D.A."/>
            <person name="Kai C."/>
            <person name="Sasaki D."/>
            <person name="Tomaru Y."/>
            <person name="Fukuda S."/>
            <person name="Kanamori-Katayama M."/>
            <person name="Suzuki M."/>
            <person name="Aoki J."/>
            <person name="Arakawa T."/>
            <person name="Iida J."/>
            <person name="Imamura K."/>
            <person name="Itoh M."/>
            <person name="Kato T."/>
            <person name="Kawaji H."/>
            <person name="Kawagashira N."/>
            <person name="Kawashima T."/>
            <person name="Kojima M."/>
            <person name="Kondo S."/>
            <person name="Konno H."/>
            <person name="Nakano K."/>
            <person name="Ninomiya N."/>
            <person name="Nishio T."/>
            <person name="Okada M."/>
            <person name="Plessy C."/>
            <person name="Shibata K."/>
            <person name="Shiraki T."/>
            <person name="Suzuki S."/>
            <person name="Tagami M."/>
            <person name="Waki K."/>
            <person name="Watahiki A."/>
            <person name="Okamura-Oho Y."/>
            <person name="Suzuki H."/>
            <person name="Kawai J."/>
            <person name="Hayashizaki Y."/>
        </authorList>
    </citation>
    <scope>NUCLEOTIDE SEQUENCE [LARGE SCALE MRNA]</scope>
    <source>
        <strain>C57BL/6J</strain>
        <strain>NOD</strain>
        <tissue>Embryonic stem cell</tissue>
        <tissue>Epididymis</tissue>
        <tissue>Spleen</tissue>
    </source>
</reference>
<reference key="4">
    <citation type="journal article" date="2004" name="Genome Res.">
        <title>The status, quality, and expansion of the NIH full-length cDNA project: the Mammalian Gene Collection (MGC).</title>
        <authorList>
            <consortium name="The MGC Project Team"/>
        </authorList>
    </citation>
    <scope>NUCLEOTIDE SEQUENCE [LARGE SCALE MRNA]</scope>
</reference>
<reference key="5">
    <citation type="journal article" date="2010" name="Cell">
        <title>A tissue-specific atlas of mouse protein phosphorylation and expression.</title>
        <authorList>
            <person name="Huttlin E.L."/>
            <person name="Jedrychowski M.P."/>
            <person name="Elias J.E."/>
            <person name="Goswami T."/>
            <person name="Rad R."/>
            <person name="Beausoleil S.A."/>
            <person name="Villen J."/>
            <person name="Haas W."/>
            <person name="Sowa M.E."/>
            <person name="Gygi S.P."/>
        </authorList>
    </citation>
    <scope>IDENTIFICATION BY MASS SPECTROMETRY [LARGE SCALE ANALYSIS]</scope>
    <source>
        <tissue>Lung</tissue>
    </source>
</reference>
<reference key="6">
    <citation type="journal article" date="2003" name="Proc. Natl. Acad. Sci. U.S.A.">
        <title>Impaired inflammatory and pain responses in mice lacking an inducible prostaglandin E synthase.</title>
        <authorList>
            <person name="Trebino C.E."/>
            <person name="Stock J.L."/>
            <person name="Gibbons C.P."/>
            <person name="Naiman B.M."/>
            <person name="Wachtmann T.S."/>
            <person name="Umland J.P."/>
            <person name="Pandher K."/>
            <person name="Lapointe J.M."/>
            <person name="Saha S."/>
            <person name="Roach M.L."/>
            <person name="Carter D."/>
            <person name="Thomas N.A."/>
            <person name="Durtschi B.A."/>
            <person name="McNeish J.D."/>
            <person name="Hambor J.E."/>
            <person name="Jakobsson P.J."/>
            <person name="Carty T.J."/>
            <person name="Perez J.R."/>
            <person name="Audoly L.P."/>
        </authorList>
    </citation>
    <scope>DISRUPTION PHENOTYPE</scope>
    <scope>FUNCTION</scope>
</reference>
<reference key="7">
    <citation type="journal article" date="2003" name="Nat. Neurosci.">
        <title>Microsomal prostaglandin E synthase-1 is the central switch during immune-induced pyresis.</title>
        <authorList>
            <person name="Engblom D."/>
            <person name="Saha S."/>
            <person name="Engstroem L."/>
            <person name="Westman M."/>
            <person name="Audoly L.P."/>
            <person name="Jakobsson P.J."/>
            <person name="Blomqvist A."/>
        </authorList>
    </citation>
    <scope>DISRUPTION PHENOTYPE</scope>
    <scope>FUNCTION</scope>
</reference>
<keyword id="KW-0963">Cytoplasm</keyword>
<keyword id="KW-0275">Fatty acid biosynthesis</keyword>
<keyword id="KW-0276">Fatty acid metabolism</keyword>
<keyword id="KW-0413">Isomerase</keyword>
<keyword id="KW-0444">Lipid biosynthesis</keyword>
<keyword id="KW-0443">Lipid metabolism</keyword>
<keyword id="KW-0472">Membrane</keyword>
<keyword id="KW-0560">Oxidoreductase</keyword>
<keyword id="KW-0643">Prostaglandin biosynthesis</keyword>
<keyword id="KW-0644">Prostaglandin metabolism</keyword>
<keyword id="KW-1185">Reference proteome</keyword>
<keyword id="KW-0808">Transferase</keyword>
<keyword id="KW-0812">Transmembrane</keyword>
<keyword id="KW-1133">Transmembrane helix</keyword>
<dbReference type="EC" id="5.3.99.3" evidence="2 3"/>
<dbReference type="EC" id="1.11.1.-" evidence="1"/>
<dbReference type="EC" id="2.5.1.18" evidence="1"/>
<dbReference type="EMBL" id="AB041997">
    <property type="protein sequence ID" value="BAA96083.1"/>
    <property type="molecule type" value="mRNA"/>
</dbReference>
<dbReference type="EMBL" id="AB035323">
    <property type="protein sequence ID" value="BAB71813.1"/>
    <property type="molecule type" value="mRNA"/>
</dbReference>
<dbReference type="EMBL" id="AK010757">
    <property type="protein sequence ID" value="BAB27163.1"/>
    <property type="molecule type" value="mRNA"/>
</dbReference>
<dbReference type="EMBL" id="AK033752">
    <property type="protein sequence ID" value="BAC28463.1"/>
    <property type="molecule type" value="mRNA"/>
</dbReference>
<dbReference type="EMBL" id="AK172621">
    <property type="protein sequence ID" value="BAE43099.1"/>
    <property type="molecule type" value="mRNA"/>
</dbReference>
<dbReference type="EMBL" id="BC024960">
    <property type="protein sequence ID" value="AAH24960.1"/>
    <property type="molecule type" value="mRNA"/>
</dbReference>
<dbReference type="CCDS" id="CCDS15889.1"/>
<dbReference type="RefSeq" id="NP_071860.1">
    <property type="nucleotide sequence ID" value="NM_022415.3"/>
</dbReference>
<dbReference type="SMR" id="Q9JM51"/>
<dbReference type="BioGRID" id="211054">
    <property type="interactions" value="1"/>
</dbReference>
<dbReference type="FunCoup" id="Q9JM51">
    <property type="interactions" value="496"/>
</dbReference>
<dbReference type="STRING" id="10090.ENSMUSP00000099916"/>
<dbReference type="BindingDB" id="Q9JM51"/>
<dbReference type="ChEMBL" id="CHEMBL2046261"/>
<dbReference type="iPTMnet" id="Q9JM51"/>
<dbReference type="PhosphoSitePlus" id="Q9JM51"/>
<dbReference type="PaxDb" id="10090-ENSMUSP00000099916"/>
<dbReference type="ProteomicsDB" id="291618"/>
<dbReference type="Pumba" id="Q9JM51"/>
<dbReference type="Antibodypedia" id="17900">
    <property type="antibodies" value="219 antibodies from 33 providers"/>
</dbReference>
<dbReference type="DNASU" id="64292"/>
<dbReference type="Ensembl" id="ENSMUST00000102852.6">
    <property type="protein sequence ID" value="ENSMUSP00000099916.4"/>
    <property type="gene ID" value="ENSMUSG00000050737.14"/>
</dbReference>
<dbReference type="GeneID" id="64292"/>
<dbReference type="KEGG" id="mmu:64292"/>
<dbReference type="UCSC" id="uc008jcz.1">
    <property type="organism name" value="mouse"/>
</dbReference>
<dbReference type="AGR" id="MGI:1927593"/>
<dbReference type="CTD" id="9536"/>
<dbReference type="MGI" id="MGI:1927593">
    <property type="gene designation" value="Ptges"/>
</dbReference>
<dbReference type="VEuPathDB" id="HostDB:ENSMUSG00000050737"/>
<dbReference type="eggNOG" id="ENOG502RZBK">
    <property type="taxonomic scope" value="Eukaryota"/>
</dbReference>
<dbReference type="GeneTree" id="ENSGT00390000011980"/>
<dbReference type="HOGENOM" id="CLU_105467_1_1_1"/>
<dbReference type="InParanoid" id="Q9JM51"/>
<dbReference type="OMA" id="TIAQIPC"/>
<dbReference type="OrthoDB" id="193139at2759"/>
<dbReference type="PhylomeDB" id="Q9JM51"/>
<dbReference type="TreeFam" id="TF105327"/>
<dbReference type="BRENDA" id="5.3.99.3">
    <property type="organism ID" value="3474"/>
</dbReference>
<dbReference type="Reactome" id="R-MMU-2162123">
    <property type="pathway name" value="Synthesis of Prostaglandins (PG) and Thromboxanes (TX)"/>
</dbReference>
<dbReference type="UniPathway" id="UPA00662"/>
<dbReference type="BioGRID-ORCS" id="64292">
    <property type="hits" value="0 hits in 79 CRISPR screens"/>
</dbReference>
<dbReference type="ChiTaRS" id="Ptges">
    <property type="organism name" value="mouse"/>
</dbReference>
<dbReference type="PRO" id="PR:Q9JM51"/>
<dbReference type="Proteomes" id="UP000000589">
    <property type="component" value="Chromosome 2"/>
</dbReference>
<dbReference type="RNAct" id="Q9JM51">
    <property type="molecule type" value="protein"/>
</dbReference>
<dbReference type="Bgee" id="ENSMUSG00000050737">
    <property type="expression patterns" value="Expressed in embryonic cell in blastocyst and 137 other cell types or tissues"/>
</dbReference>
<dbReference type="GO" id="GO:0005737">
    <property type="term" value="C:cytoplasm"/>
    <property type="evidence" value="ECO:0000314"/>
    <property type="project" value="MGI"/>
</dbReference>
<dbReference type="GO" id="GO:0016020">
    <property type="term" value="C:membrane"/>
    <property type="evidence" value="ECO:0000250"/>
    <property type="project" value="UniProtKB"/>
</dbReference>
<dbReference type="GO" id="GO:0005641">
    <property type="term" value="C:nuclear envelope lumen"/>
    <property type="evidence" value="ECO:0000314"/>
    <property type="project" value="MGI"/>
</dbReference>
<dbReference type="GO" id="GO:0048471">
    <property type="term" value="C:perinuclear region of cytoplasm"/>
    <property type="evidence" value="ECO:0007669"/>
    <property type="project" value="UniProtKB-SubCell"/>
</dbReference>
<dbReference type="GO" id="GO:0043295">
    <property type="term" value="F:glutathione binding"/>
    <property type="evidence" value="ECO:0000250"/>
    <property type="project" value="UniProtKB"/>
</dbReference>
<dbReference type="GO" id="GO:0004602">
    <property type="term" value="F:glutathione peroxidase activity"/>
    <property type="evidence" value="ECO:0000250"/>
    <property type="project" value="UniProtKB"/>
</dbReference>
<dbReference type="GO" id="GO:0004364">
    <property type="term" value="F:glutathione transferase activity"/>
    <property type="evidence" value="ECO:0000250"/>
    <property type="project" value="UniProtKB"/>
</dbReference>
<dbReference type="GO" id="GO:0004667">
    <property type="term" value="F:prostaglandin-D synthase activity"/>
    <property type="evidence" value="ECO:0000314"/>
    <property type="project" value="UniProtKB"/>
</dbReference>
<dbReference type="GO" id="GO:0050220">
    <property type="term" value="F:prostaglandin-E synthase activity"/>
    <property type="evidence" value="ECO:0000250"/>
    <property type="project" value="UniProtKB"/>
</dbReference>
<dbReference type="GO" id="GO:0008283">
    <property type="term" value="P:cell population proliferation"/>
    <property type="evidence" value="ECO:0000316"/>
    <property type="project" value="MGI"/>
</dbReference>
<dbReference type="GO" id="GO:0008285">
    <property type="term" value="P:negative regulation of cell population proliferation"/>
    <property type="evidence" value="ECO:0000316"/>
    <property type="project" value="MGI"/>
</dbReference>
<dbReference type="GO" id="GO:0032308">
    <property type="term" value="P:positive regulation of prostaglandin secretion"/>
    <property type="evidence" value="ECO:0000315"/>
    <property type="project" value="MGI"/>
</dbReference>
<dbReference type="GO" id="GO:0001516">
    <property type="term" value="P:prostaglandin biosynthetic process"/>
    <property type="evidence" value="ECO:0000314"/>
    <property type="project" value="UniProtKB"/>
</dbReference>
<dbReference type="GO" id="GO:0006693">
    <property type="term" value="P:prostaglandin metabolic process"/>
    <property type="evidence" value="ECO:0000314"/>
    <property type="project" value="MGI"/>
</dbReference>
<dbReference type="GO" id="GO:0031620">
    <property type="term" value="P:regulation of fever generation"/>
    <property type="evidence" value="ECO:0000315"/>
    <property type="project" value="UniProtKB"/>
</dbReference>
<dbReference type="GO" id="GO:0050727">
    <property type="term" value="P:regulation of inflammatory response"/>
    <property type="evidence" value="ECO:0000315"/>
    <property type="project" value="UniProtKB"/>
</dbReference>
<dbReference type="GO" id="GO:0019233">
    <property type="term" value="P:sensory perception of pain"/>
    <property type="evidence" value="ECO:0000315"/>
    <property type="project" value="UniProtKB"/>
</dbReference>
<dbReference type="FunFam" id="1.20.120.550:FF:000002">
    <property type="entry name" value="Microsomal glutathione S-transferase 1"/>
    <property type="match status" value="1"/>
</dbReference>
<dbReference type="Gene3D" id="1.20.120.550">
    <property type="entry name" value="Membrane associated eicosanoid/glutathione metabolism-like domain"/>
    <property type="match status" value="1"/>
</dbReference>
<dbReference type="InterPro" id="IPR023352">
    <property type="entry name" value="MAPEG-like_dom_sf"/>
</dbReference>
<dbReference type="InterPro" id="IPR001129">
    <property type="entry name" value="Membr-assoc_MAPEG"/>
</dbReference>
<dbReference type="InterPro" id="IPR040162">
    <property type="entry name" value="MGST1-like"/>
</dbReference>
<dbReference type="PANTHER" id="PTHR10689">
    <property type="entry name" value="MICROSOMAL GLUTATHIONE S-TRANSFERASE 1"/>
    <property type="match status" value="1"/>
</dbReference>
<dbReference type="PANTHER" id="PTHR10689:SF9">
    <property type="entry name" value="PROSTAGLANDIN E SYNTHASE"/>
    <property type="match status" value="1"/>
</dbReference>
<dbReference type="Pfam" id="PF01124">
    <property type="entry name" value="MAPEG"/>
    <property type="match status" value="1"/>
</dbReference>
<dbReference type="SUPFAM" id="SSF161084">
    <property type="entry name" value="MAPEG domain-like"/>
    <property type="match status" value="1"/>
</dbReference>
<protein>
    <recommendedName>
        <fullName>Prostaglandin E synthase</fullName>
        <shortName>mPGES-1</shortName>
        <ecNumber evidence="2 3">5.3.99.3</ecNumber>
    </recommendedName>
    <alternativeName>
        <fullName>Glutathione peroxidase PTGES</fullName>
        <ecNumber evidence="1">1.11.1.-</ecNumber>
    </alternativeName>
    <alternativeName>
        <fullName>Glutathione transferase PTGES</fullName>
        <ecNumber evidence="1">2.5.1.18</ecNumber>
    </alternativeName>
    <alternativeName>
        <fullName>Microsomal prostaglandin E synthase 1</fullName>
    </alternativeName>
</protein>
<name>PTGES_MOUSE</name>
<accession>Q9JM51</accession>
<accession>Q3T9C5</accession>
<proteinExistence type="evidence at protein level"/>
<comment type="function">
    <text evidence="1 2 3 4 5">Terminal enzyme of the cyclooxygenase (COX)-2-mediated prostaglandin E2 (PGE2) biosynthetic pathway (PubMed:10869354, PubMed:11795891). Catalyzes the glutathione-dependent oxidoreduction of prostaglandin endoperoxide H2 (PGH2) to prostaglandin E2 (PGE2) in response to inflammatory stimuli (PubMed:10869354, PubMed:11795891). Plays a key role in inflammation response, fever and pain (PubMed:12835414, PubMed:14566340). Also catalyzes the oxidoreduction of endocannabinoids into prostaglandin glycerol esters and PGG2 into 15-hydroperoxy-PGE2. In addition, displays low glutathione transferase and glutathione-dependent peroxidase activities, toward 1-chloro-2,4-dinitrobenzene and 5-hydroperoxyicosatetraenoic acid (5-HPETE), respectively (By similarity).</text>
</comment>
<comment type="catalytic activity">
    <reaction evidence="2 3">
        <text>prostaglandin H2 = prostaglandin E2</text>
        <dbReference type="Rhea" id="RHEA:12893"/>
        <dbReference type="ChEBI" id="CHEBI:57405"/>
        <dbReference type="ChEBI" id="CHEBI:606564"/>
        <dbReference type="EC" id="5.3.99.3"/>
    </reaction>
    <physiologicalReaction direction="left-to-right" evidence="1">
        <dbReference type="Rhea" id="RHEA:12894"/>
    </physiologicalReaction>
</comment>
<comment type="catalytic activity">
    <reaction evidence="1">
        <text>2-glyceryl-prostaglandin H2 = 2-glyceryl-prostaglandin E2</text>
        <dbReference type="Rhea" id="RHEA:53324"/>
        <dbReference type="ChEBI" id="CHEBI:85166"/>
        <dbReference type="ChEBI" id="CHEBI:137172"/>
    </reaction>
    <physiologicalReaction direction="left-to-right" evidence="1">
        <dbReference type="Rhea" id="RHEA:53325"/>
    </physiologicalReaction>
</comment>
<comment type="catalytic activity">
    <reaction evidence="1">
        <text>prostaglandin G2 = (15S)-15-hydroperoxy-prostaglandin E2</text>
        <dbReference type="Rhea" id="RHEA:64364"/>
        <dbReference type="ChEBI" id="CHEBI:82629"/>
        <dbReference type="ChEBI" id="CHEBI:152564"/>
    </reaction>
    <physiologicalReaction direction="left-to-right" evidence="1">
        <dbReference type="Rhea" id="RHEA:64365"/>
    </physiologicalReaction>
</comment>
<comment type="catalytic activity">
    <reaction evidence="1">
        <text>1-chloro-2,4-dinitrobenzene + glutathione = 2,4-dinitrophenyl-S-glutathione + chloride + H(+)</text>
        <dbReference type="Rhea" id="RHEA:51220"/>
        <dbReference type="ChEBI" id="CHEBI:15378"/>
        <dbReference type="ChEBI" id="CHEBI:17996"/>
        <dbReference type="ChEBI" id="CHEBI:34718"/>
        <dbReference type="ChEBI" id="CHEBI:57925"/>
        <dbReference type="ChEBI" id="CHEBI:133977"/>
        <dbReference type="EC" id="2.5.1.18"/>
    </reaction>
</comment>
<comment type="catalytic activity">
    <reaction evidence="1">
        <text>(5S)-hydroperoxy-(6E,8Z,11Z,14Z)-eicosatetraenoate + 2 glutathione = (5S)-hydroxy-(6E,8Z,11Z,14Z)-eicosatetraenoate + glutathione disulfide + H2O</text>
        <dbReference type="Rhea" id="RHEA:48620"/>
        <dbReference type="ChEBI" id="CHEBI:15377"/>
        <dbReference type="ChEBI" id="CHEBI:57450"/>
        <dbReference type="ChEBI" id="CHEBI:57925"/>
        <dbReference type="ChEBI" id="CHEBI:58297"/>
        <dbReference type="ChEBI" id="CHEBI:90632"/>
    </reaction>
</comment>
<comment type="cofactor">
    <cofactor evidence="3">
        <name>glutathione</name>
        <dbReference type="ChEBI" id="CHEBI:57925"/>
    </cofactor>
</comment>
<comment type="activity regulation">
    <text evidence="3">Activity is increased markedly in macrophages and osteoblasts following pro-inflammatory stimuli.</text>
</comment>
<comment type="biophysicochemical properties">
    <kinetics>
        <KM evidence="3">37 uM for prostaglandin H2</KM>
        <KM evidence="3">130 uM for glutathione</KM>
    </kinetics>
    <phDependence>
        <text evidence="3">Optimum pH is 8.</text>
    </phDependence>
</comment>
<comment type="pathway">
    <text evidence="2">Lipid metabolism; prostaglandin biosynthesis.</text>
</comment>
<comment type="subunit">
    <text evidence="1">Homotrimer.</text>
</comment>
<comment type="subcellular location">
    <subcellularLocation>
        <location evidence="3">Membrane</location>
        <topology evidence="1">Multi-pass membrane protein</topology>
    </subcellularLocation>
    <subcellularLocation>
        <location evidence="1">Cytoplasm</location>
        <location evidence="1">Perinuclear region</location>
    </subcellularLocation>
    <text evidence="1">Colocalizes with PTGS1/COX-1 and PTGS2/COX-2 in the perinuclear compartment.</text>
</comment>
<comment type="induction">
    <text evidence="2 3">Induced by pro-inflammatory stimuli and down-regulated by anti-inflammatory glucocorticoid.</text>
</comment>
<comment type="disruption phenotype">
    <text evidence="4 5">Deficient mice are viable and fertile and develop normally (PubMed:12835414, PubMed:14566340). However mice display a marked reduction in inflammatory responses and reduced pain sensitivity (PubMed:12835414). PTGES deletion results in a reduction of PGE2 levels in the central nervous system in association with the impaired LPS-induced febrile response (PubMed:14566340).</text>
</comment>
<comment type="similarity">
    <text evidence="6">Belongs to the MAPEG family.</text>
</comment>
<evidence type="ECO:0000250" key="1">
    <source>
        <dbReference type="UniProtKB" id="O14684"/>
    </source>
</evidence>
<evidence type="ECO:0000269" key="2">
    <source>
    </source>
</evidence>
<evidence type="ECO:0000269" key="3">
    <source>
    </source>
</evidence>
<evidence type="ECO:0000269" key="4">
    <source>
    </source>
</evidence>
<evidence type="ECO:0000269" key="5">
    <source>
    </source>
</evidence>
<evidence type="ECO:0000305" key="6"/>
<gene>
    <name type="primary">Ptges</name>
    <name type="synonym">Pges</name>
</gene>
<feature type="chain" id="PRO_0000217747" description="Prostaglandin E synthase">
    <location>
        <begin position="1"/>
        <end position="153"/>
    </location>
</feature>
<feature type="topological domain" description="Lumenal" evidence="1">
    <location>
        <begin position="1"/>
        <end position="13"/>
    </location>
</feature>
<feature type="transmembrane region" description="Helical" evidence="1">
    <location>
        <begin position="14"/>
        <end position="42"/>
    </location>
</feature>
<feature type="topological domain" description="Cytoplasmic" evidence="1">
    <location>
        <begin position="43"/>
        <end position="61"/>
    </location>
</feature>
<feature type="transmembrane region" description="Helical" evidence="1">
    <location>
        <begin position="62"/>
        <end position="91"/>
    </location>
</feature>
<feature type="topological domain" description="Lumenal" evidence="1">
    <location>
        <begin position="92"/>
        <end position="96"/>
    </location>
</feature>
<feature type="transmembrane region" description="Helical" evidence="1">
    <location>
        <begin position="97"/>
        <end position="120"/>
    </location>
</feature>
<feature type="topological domain" description="Cytoplasmic" evidence="1">
    <location>
        <begin position="121"/>
        <end position="124"/>
    </location>
</feature>
<feature type="transmembrane region" description="Helical" evidence="1">
    <location>
        <begin position="125"/>
        <end position="153"/>
    </location>
</feature>
<feature type="binding site" evidence="1">
    <location>
        <position position="39"/>
    </location>
    <ligand>
        <name>glutathione</name>
        <dbReference type="ChEBI" id="CHEBI:57925"/>
    </ligand>
</feature>
<feature type="binding site" evidence="1">
    <location>
        <begin position="74"/>
        <end position="78"/>
    </location>
    <ligand>
        <name>glutathione</name>
        <dbReference type="ChEBI" id="CHEBI:57925"/>
    </ligand>
</feature>
<feature type="binding site" evidence="1">
    <location>
        <position position="114"/>
    </location>
    <ligand>
        <name>glutathione</name>
        <dbReference type="ChEBI" id="CHEBI:57925"/>
    </ligand>
</feature>
<feature type="binding site" evidence="1">
    <location>
        <position position="118"/>
    </location>
    <ligand>
        <name>glutathione</name>
        <dbReference type="ChEBI" id="CHEBI:57925"/>
    </ligand>
</feature>
<feature type="binding site" evidence="1">
    <location>
        <begin position="127"/>
        <end position="131"/>
    </location>
    <ligand>
        <name>glutathione</name>
        <dbReference type="ChEBI" id="CHEBI:57925"/>
    </ligand>
</feature>
<feature type="site" description="Essential for protaglandin-E synthase activity" evidence="1">
    <location>
        <position position="50"/>
    </location>
</feature>
<feature type="site" description="Essential for protaglandin-E synthase activity" evidence="1">
    <location>
        <position position="127"/>
    </location>
</feature>